<accession>Q1D758</accession>
<feature type="chain" id="PRO_0000323157" description="Small ribosomal subunit protein uS5">
    <location>
        <begin position="1"/>
        <end position="173"/>
    </location>
</feature>
<feature type="domain" description="S5 DRBM" evidence="1">
    <location>
        <begin position="12"/>
        <end position="75"/>
    </location>
</feature>
<name>RS5_MYXXD</name>
<evidence type="ECO:0000255" key="1">
    <source>
        <dbReference type="HAMAP-Rule" id="MF_01307"/>
    </source>
</evidence>
<evidence type="ECO:0000305" key="2"/>
<sequence length="173" mass="18048">MATPINPNDLDLTDRVVNINRVAKVVKGGRRFSFAALVVVGDGAGHVGVGLGKANEVPEAIRKGGENAKKNLFRVPLVGHTIPHEVLGHFGAGWVLLKPATQGTGVIAGGAVRAVLEAAGIRNILTKSQGSRNPHNVLKATVAGLKLLRSAEQVSRLRGKDVEPAKLAGEQRG</sequence>
<reference key="1">
    <citation type="journal article" date="2006" name="Proc. Natl. Acad. Sci. U.S.A.">
        <title>Evolution of sensory complexity recorded in a myxobacterial genome.</title>
        <authorList>
            <person name="Goldman B.S."/>
            <person name="Nierman W.C."/>
            <person name="Kaiser D."/>
            <person name="Slater S.C."/>
            <person name="Durkin A.S."/>
            <person name="Eisen J.A."/>
            <person name="Ronning C.M."/>
            <person name="Barbazuk W.B."/>
            <person name="Blanchard M."/>
            <person name="Field C."/>
            <person name="Halling C."/>
            <person name="Hinkle G."/>
            <person name="Iartchuk O."/>
            <person name="Kim H.S."/>
            <person name="Mackenzie C."/>
            <person name="Madupu R."/>
            <person name="Miller N."/>
            <person name="Shvartsbeyn A."/>
            <person name="Sullivan S.A."/>
            <person name="Vaudin M."/>
            <person name="Wiegand R."/>
            <person name="Kaplan H.B."/>
        </authorList>
    </citation>
    <scope>NUCLEOTIDE SEQUENCE [LARGE SCALE GENOMIC DNA]</scope>
    <source>
        <strain>DK1622</strain>
    </source>
</reference>
<proteinExistence type="inferred from homology"/>
<gene>
    <name evidence="1" type="primary">rpsE</name>
    <name type="ordered locus">MXAN_3316</name>
</gene>
<comment type="function">
    <text evidence="1">With S4 and S12 plays an important role in translational accuracy.</text>
</comment>
<comment type="function">
    <text evidence="1">Located at the back of the 30S subunit body where it stabilizes the conformation of the head with respect to the body.</text>
</comment>
<comment type="subunit">
    <text evidence="1">Part of the 30S ribosomal subunit. Contacts proteins S4 and S8.</text>
</comment>
<comment type="domain">
    <text>The N-terminal domain interacts with the head of the 30S subunit; the C-terminal domain interacts with the body and contacts protein S4. The interaction surface between S4 and S5 is involved in control of translational fidelity.</text>
</comment>
<comment type="similarity">
    <text evidence="1">Belongs to the universal ribosomal protein uS5 family.</text>
</comment>
<keyword id="KW-1185">Reference proteome</keyword>
<keyword id="KW-0687">Ribonucleoprotein</keyword>
<keyword id="KW-0689">Ribosomal protein</keyword>
<keyword id="KW-0694">RNA-binding</keyword>
<keyword id="KW-0699">rRNA-binding</keyword>
<protein>
    <recommendedName>
        <fullName evidence="1">Small ribosomal subunit protein uS5</fullName>
    </recommendedName>
    <alternativeName>
        <fullName evidence="2">30S ribosomal protein S5</fullName>
    </alternativeName>
</protein>
<dbReference type="EMBL" id="CP000113">
    <property type="protein sequence ID" value="ABF89987.1"/>
    <property type="molecule type" value="Genomic_DNA"/>
</dbReference>
<dbReference type="RefSeq" id="WP_011553352.1">
    <property type="nucleotide sequence ID" value="NC_008095.1"/>
</dbReference>
<dbReference type="SMR" id="Q1D758"/>
<dbReference type="STRING" id="246197.MXAN_3316"/>
<dbReference type="EnsemblBacteria" id="ABF89987">
    <property type="protein sequence ID" value="ABF89987"/>
    <property type="gene ID" value="MXAN_3316"/>
</dbReference>
<dbReference type="GeneID" id="41360669"/>
<dbReference type="KEGG" id="mxa:MXAN_3316"/>
<dbReference type="eggNOG" id="COG0098">
    <property type="taxonomic scope" value="Bacteria"/>
</dbReference>
<dbReference type="HOGENOM" id="CLU_065898_2_2_7"/>
<dbReference type="OrthoDB" id="9809045at2"/>
<dbReference type="Proteomes" id="UP000002402">
    <property type="component" value="Chromosome"/>
</dbReference>
<dbReference type="GO" id="GO:0015935">
    <property type="term" value="C:small ribosomal subunit"/>
    <property type="evidence" value="ECO:0007669"/>
    <property type="project" value="InterPro"/>
</dbReference>
<dbReference type="GO" id="GO:0019843">
    <property type="term" value="F:rRNA binding"/>
    <property type="evidence" value="ECO:0007669"/>
    <property type="project" value="UniProtKB-UniRule"/>
</dbReference>
<dbReference type="GO" id="GO:0003735">
    <property type="term" value="F:structural constituent of ribosome"/>
    <property type="evidence" value="ECO:0007669"/>
    <property type="project" value="InterPro"/>
</dbReference>
<dbReference type="GO" id="GO:0006412">
    <property type="term" value="P:translation"/>
    <property type="evidence" value="ECO:0007669"/>
    <property type="project" value="UniProtKB-UniRule"/>
</dbReference>
<dbReference type="FunFam" id="3.30.160.20:FF:000001">
    <property type="entry name" value="30S ribosomal protein S5"/>
    <property type="match status" value="1"/>
</dbReference>
<dbReference type="FunFam" id="3.30.230.10:FF:000002">
    <property type="entry name" value="30S ribosomal protein S5"/>
    <property type="match status" value="1"/>
</dbReference>
<dbReference type="Gene3D" id="3.30.160.20">
    <property type="match status" value="1"/>
</dbReference>
<dbReference type="Gene3D" id="3.30.230.10">
    <property type="match status" value="1"/>
</dbReference>
<dbReference type="HAMAP" id="MF_01307_B">
    <property type="entry name" value="Ribosomal_uS5_B"/>
    <property type="match status" value="1"/>
</dbReference>
<dbReference type="InterPro" id="IPR020568">
    <property type="entry name" value="Ribosomal_Su5_D2-typ_SF"/>
</dbReference>
<dbReference type="InterPro" id="IPR000851">
    <property type="entry name" value="Ribosomal_uS5"/>
</dbReference>
<dbReference type="InterPro" id="IPR005712">
    <property type="entry name" value="Ribosomal_uS5_bac-type"/>
</dbReference>
<dbReference type="InterPro" id="IPR005324">
    <property type="entry name" value="Ribosomal_uS5_C"/>
</dbReference>
<dbReference type="InterPro" id="IPR013810">
    <property type="entry name" value="Ribosomal_uS5_N"/>
</dbReference>
<dbReference type="InterPro" id="IPR018192">
    <property type="entry name" value="Ribosomal_uS5_N_CS"/>
</dbReference>
<dbReference type="InterPro" id="IPR014721">
    <property type="entry name" value="Ribsml_uS5_D2-typ_fold_subgr"/>
</dbReference>
<dbReference type="NCBIfam" id="TIGR01021">
    <property type="entry name" value="rpsE_bact"/>
    <property type="match status" value="1"/>
</dbReference>
<dbReference type="PANTHER" id="PTHR48277">
    <property type="entry name" value="MITOCHONDRIAL RIBOSOMAL PROTEIN S5"/>
    <property type="match status" value="1"/>
</dbReference>
<dbReference type="PANTHER" id="PTHR48277:SF1">
    <property type="entry name" value="MITOCHONDRIAL RIBOSOMAL PROTEIN S5"/>
    <property type="match status" value="1"/>
</dbReference>
<dbReference type="Pfam" id="PF00333">
    <property type="entry name" value="Ribosomal_S5"/>
    <property type="match status" value="1"/>
</dbReference>
<dbReference type="Pfam" id="PF03719">
    <property type="entry name" value="Ribosomal_S5_C"/>
    <property type="match status" value="1"/>
</dbReference>
<dbReference type="SUPFAM" id="SSF54768">
    <property type="entry name" value="dsRNA-binding domain-like"/>
    <property type="match status" value="1"/>
</dbReference>
<dbReference type="SUPFAM" id="SSF54211">
    <property type="entry name" value="Ribosomal protein S5 domain 2-like"/>
    <property type="match status" value="1"/>
</dbReference>
<dbReference type="PROSITE" id="PS00585">
    <property type="entry name" value="RIBOSOMAL_S5"/>
    <property type="match status" value="1"/>
</dbReference>
<dbReference type="PROSITE" id="PS50881">
    <property type="entry name" value="S5_DSRBD"/>
    <property type="match status" value="1"/>
</dbReference>
<organism>
    <name type="scientific">Myxococcus xanthus (strain DK1622)</name>
    <dbReference type="NCBI Taxonomy" id="246197"/>
    <lineage>
        <taxon>Bacteria</taxon>
        <taxon>Pseudomonadati</taxon>
        <taxon>Myxococcota</taxon>
        <taxon>Myxococcia</taxon>
        <taxon>Myxococcales</taxon>
        <taxon>Cystobacterineae</taxon>
        <taxon>Myxococcaceae</taxon>
        <taxon>Myxococcus</taxon>
    </lineage>
</organism>